<keyword id="KW-0028">Amino-acid biosynthesis</keyword>
<keyword id="KW-0100">Branched-chain amino acid biosynthesis</keyword>
<keyword id="KW-0460">Magnesium</keyword>
<keyword id="KW-0479">Metal-binding</keyword>
<keyword id="KW-0521">NADP</keyword>
<keyword id="KW-0560">Oxidoreductase</keyword>
<keyword id="KW-1185">Reference proteome</keyword>
<keyword id="KW-0677">Repeat</keyword>
<comment type="function">
    <text evidence="1">Involved in the biosynthesis of branched-chain amino acids (BCAA). Catalyzes an alkyl-migration followed by a ketol-acid reduction of (S)-2-acetolactate (S2AL) to yield (R)-2,3-dihydroxy-isovalerate. In the isomerase reaction, S2AL is rearranged via a Mg-dependent methyl migration to produce 3-hydroxy-3-methyl-2-ketobutyrate (HMKB). In the reductase reaction, this 2-ketoacid undergoes a metal-dependent reduction by NADPH to yield (R)-2,3-dihydroxy-isovalerate.</text>
</comment>
<comment type="catalytic activity">
    <reaction evidence="1">
        <text>(2R)-2,3-dihydroxy-3-methylbutanoate + NADP(+) = (2S)-2-acetolactate + NADPH + H(+)</text>
        <dbReference type="Rhea" id="RHEA:22068"/>
        <dbReference type="ChEBI" id="CHEBI:15378"/>
        <dbReference type="ChEBI" id="CHEBI:49072"/>
        <dbReference type="ChEBI" id="CHEBI:57783"/>
        <dbReference type="ChEBI" id="CHEBI:58349"/>
        <dbReference type="ChEBI" id="CHEBI:58476"/>
        <dbReference type="EC" id="1.1.1.86"/>
    </reaction>
</comment>
<comment type="catalytic activity">
    <reaction evidence="1">
        <text>(2R,3R)-2,3-dihydroxy-3-methylpentanoate + NADP(+) = (S)-2-ethyl-2-hydroxy-3-oxobutanoate + NADPH + H(+)</text>
        <dbReference type="Rhea" id="RHEA:13493"/>
        <dbReference type="ChEBI" id="CHEBI:15378"/>
        <dbReference type="ChEBI" id="CHEBI:49256"/>
        <dbReference type="ChEBI" id="CHEBI:49258"/>
        <dbReference type="ChEBI" id="CHEBI:57783"/>
        <dbReference type="ChEBI" id="CHEBI:58349"/>
        <dbReference type="EC" id="1.1.1.86"/>
    </reaction>
</comment>
<comment type="cofactor">
    <cofactor evidence="1">
        <name>Mg(2+)</name>
        <dbReference type="ChEBI" id="CHEBI:18420"/>
    </cofactor>
    <text evidence="1">Binds 2 magnesium ions per subunit.</text>
</comment>
<comment type="pathway">
    <text evidence="1">Amino-acid biosynthesis; L-isoleucine biosynthesis; L-isoleucine from 2-oxobutanoate: step 2/4.</text>
</comment>
<comment type="pathway">
    <text evidence="1">Amino-acid biosynthesis; L-valine biosynthesis; L-valine from pyruvate: step 2/4.</text>
</comment>
<comment type="similarity">
    <text evidence="1">Belongs to the ketol-acid reductoisomerase family.</text>
</comment>
<name>ILVC_ALIF1</name>
<dbReference type="EC" id="1.1.1.86" evidence="1"/>
<dbReference type="EMBL" id="CP000020">
    <property type="protein sequence ID" value="AAW87023.1"/>
    <property type="molecule type" value="Genomic_DNA"/>
</dbReference>
<dbReference type="RefSeq" id="WP_005421503.1">
    <property type="nucleotide sequence ID" value="NC_006840.2"/>
</dbReference>
<dbReference type="RefSeq" id="YP_205911.1">
    <property type="nucleotide sequence ID" value="NC_006840.2"/>
</dbReference>
<dbReference type="SMR" id="Q5E1S3"/>
<dbReference type="STRING" id="312309.VF_2528"/>
<dbReference type="EnsemblBacteria" id="AAW87023">
    <property type="protein sequence ID" value="AAW87023"/>
    <property type="gene ID" value="VF_2528"/>
</dbReference>
<dbReference type="GeneID" id="54165264"/>
<dbReference type="KEGG" id="vfi:VF_2528"/>
<dbReference type="PATRIC" id="fig|312309.11.peg.2557"/>
<dbReference type="eggNOG" id="COG0059">
    <property type="taxonomic scope" value="Bacteria"/>
</dbReference>
<dbReference type="HOGENOM" id="CLU_551905_0_0_6"/>
<dbReference type="OrthoDB" id="9804088at2"/>
<dbReference type="UniPathway" id="UPA00047">
    <property type="reaction ID" value="UER00056"/>
</dbReference>
<dbReference type="UniPathway" id="UPA00049">
    <property type="reaction ID" value="UER00060"/>
</dbReference>
<dbReference type="Proteomes" id="UP000000537">
    <property type="component" value="Chromosome I"/>
</dbReference>
<dbReference type="GO" id="GO:0005829">
    <property type="term" value="C:cytosol"/>
    <property type="evidence" value="ECO:0007669"/>
    <property type="project" value="TreeGrafter"/>
</dbReference>
<dbReference type="GO" id="GO:0004455">
    <property type="term" value="F:ketol-acid reductoisomerase activity"/>
    <property type="evidence" value="ECO:0007669"/>
    <property type="project" value="UniProtKB-UniRule"/>
</dbReference>
<dbReference type="GO" id="GO:0000287">
    <property type="term" value="F:magnesium ion binding"/>
    <property type="evidence" value="ECO:0007669"/>
    <property type="project" value="UniProtKB-UniRule"/>
</dbReference>
<dbReference type="GO" id="GO:0009097">
    <property type="term" value="P:isoleucine biosynthetic process"/>
    <property type="evidence" value="ECO:0007669"/>
    <property type="project" value="UniProtKB-UniRule"/>
</dbReference>
<dbReference type="GO" id="GO:0009099">
    <property type="term" value="P:L-valine biosynthetic process"/>
    <property type="evidence" value="ECO:0007669"/>
    <property type="project" value="UniProtKB-UniRule"/>
</dbReference>
<dbReference type="FunFam" id="1.10.1040.10:FF:000007">
    <property type="entry name" value="Ketol-acid reductoisomerase (NADP(+))"/>
    <property type="match status" value="1"/>
</dbReference>
<dbReference type="FunFam" id="3.40.50.720:FF:000043">
    <property type="entry name" value="Ketol-acid reductoisomerase (NADP(+))"/>
    <property type="match status" value="1"/>
</dbReference>
<dbReference type="Gene3D" id="1.10.1040.10">
    <property type="entry name" value="N-(1-d-carboxylethyl)-l-norvaline Dehydrogenase, domain 2"/>
    <property type="match status" value="1"/>
</dbReference>
<dbReference type="Gene3D" id="3.40.50.720">
    <property type="entry name" value="NAD(P)-binding Rossmann-like Domain"/>
    <property type="match status" value="1"/>
</dbReference>
<dbReference type="HAMAP" id="MF_00435">
    <property type="entry name" value="IlvC"/>
    <property type="match status" value="1"/>
</dbReference>
<dbReference type="InterPro" id="IPR008927">
    <property type="entry name" value="6-PGluconate_DH-like_C_sf"/>
</dbReference>
<dbReference type="InterPro" id="IPR013328">
    <property type="entry name" value="6PGD_dom2"/>
</dbReference>
<dbReference type="InterPro" id="IPR013023">
    <property type="entry name" value="KARI"/>
</dbReference>
<dbReference type="InterPro" id="IPR000506">
    <property type="entry name" value="KARI_C"/>
</dbReference>
<dbReference type="InterPro" id="IPR013116">
    <property type="entry name" value="KARI_N"/>
</dbReference>
<dbReference type="InterPro" id="IPR036291">
    <property type="entry name" value="NAD(P)-bd_dom_sf"/>
</dbReference>
<dbReference type="NCBIfam" id="TIGR00465">
    <property type="entry name" value="ilvC"/>
    <property type="match status" value="1"/>
</dbReference>
<dbReference type="NCBIfam" id="NF003557">
    <property type="entry name" value="PRK05225.1"/>
    <property type="match status" value="1"/>
</dbReference>
<dbReference type="PANTHER" id="PTHR21371">
    <property type="entry name" value="KETOL-ACID REDUCTOISOMERASE, MITOCHONDRIAL"/>
    <property type="match status" value="1"/>
</dbReference>
<dbReference type="PANTHER" id="PTHR21371:SF1">
    <property type="entry name" value="KETOL-ACID REDUCTOISOMERASE, MITOCHONDRIAL"/>
    <property type="match status" value="1"/>
</dbReference>
<dbReference type="Pfam" id="PF01450">
    <property type="entry name" value="KARI_C"/>
    <property type="match status" value="2"/>
</dbReference>
<dbReference type="Pfam" id="PF07991">
    <property type="entry name" value="KARI_N"/>
    <property type="match status" value="1"/>
</dbReference>
<dbReference type="SUPFAM" id="SSF48179">
    <property type="entry name" value="6-phosphogluconate dehydrogenase C-terminal domain-like"/>
    <property type="match status" value="2"/>
</dbReference>
<dbReference type="SUPFAM" id="SSF51735">
    <property type="entry name" value="NAD(P)-binding Rossmann-fold domains"/>
    <property type="match status" value="1"/>
</dbReference>
<dbReference type="PROSITE" id="PS51851">
    <property type="entry name" value="KARI_C"/>
    <property type="match status" value="2"/>
</dbReference>
<dbReference type="PROSITE" id="PS51850">
    <property type="entry name" value="KARI_N"/>
    <property type="match status" value="1"/>
</dbReference>
<gene>
    <name evidence="1" type="primary">ilvC</name>
    <name type="ordered locus">VF_2528</name>
</gene>
<organism>
    <name type="scientific">Aliivibrio fischeri (strain ATCC 700601 / ES114)</name>
    <name type="common">Vibrio fischeri</name>
    <dbReference type="NCBI Taxonomy" id="312309"/>
    <lineage>
        <taxon>Bacteria</taxon>
        <taxon>Pseudomonadati</taxon>
        <taxon>Pseudomonadota</taxon>
        <taxon>Gammaproteobacteria</taxon>
        <taxon>Vibrionales</taxon>
        <taxon>Vibrionaceae</taxon>
        <taxon>Aliivibrio</taxon>
    </lineage>
</organism>
<protein>
    <recommendedName>
        <fullName evidence="1">Ketol-acid reductoisomerase (NADP(+))</fullName>
        <shortName evidence="1">KARI</shortName>
        <ecNumber evidence="1">1.1.1.86</ecNumber>
    </recommendedName>
    <alternativeName>
        <fullName evidence="1">Acetohydroxy-acid isomeroreductase</fullName>
        <shortName evidence="1">AHIR</shortName>
    </alternativeName>
    <alternativeName>
        <fullName evidence="1">Alpha-keto-beta-hydroxylacyl reductoisomerase</fullName>
    </alternativeName>
    <alternativeName>
        <fullName evidence="1">Ketol-acid reductoisomerase type 2</fullName>
    </alternativeName>
    <alternativeName>
        <fullName evidence="1">Ketol-acid reductoisomerase type II</fullName>
    </alternativeName>
</protein>
<reference key="1">
    <citation type="journal article" date="2005" name="Proc. Natl. Acad. Sci. U.S.A.">
        <title>Complete genome sequence of Vibrio fischeri: a symbiotic bacterium with pathogenic congeners.</title>
        <authorList>
            <person name="Ruby E.G."/>
            <person name="Urbanowski M."/>
            <person name="Campbell J."/>
            <person name="Dunn A."/>
            <person name="Faini M."/>
            <person name="Gunsalus R."/>
            <person name="Lostroh P."/>
            <person name="Lupp C."/>
            <person name="McCann J."/>
            <person name="Millikan D."/>
            <person name="Schaefer A."/>
            <person name="Stabb E."/>
            <person name="Stevens A."/>
            <person name="Visick K."/>
            <person name="Whistler C."/>
            <person name="Greenberg E.P."/>
        </authorList>
    </citation>
    <scope>NUCLEOTIDE SEQUENCE [LARGE SCALE GENOMIC DNA]</scope>
    <source>
        <strain>ATCC 700601 / ES114</strain>
    </source>
</reference>
<accession>Q5E1S3</accession>
<evidence type="ECO:0000255" key="1">
    <source>
        <dbReference type="HAMAP-Rule" id="MF_00435"/>
    </source>
</evidence>
<evidence type="ECO:0000255" key="2">
    <source>
        <dbReference type="PROSITE-ProRule" id="PRU01197"/>
    </source>
</evidence>
<evidence type="ECO:0000255" key="3">
    <source>
        <dbReference type="PROSITE-ProRule" id="PRU01198"/>
    </source>
</evidence>
<proteinExistence type="inferred from homology"/>
<feature type="chain" id="PRO_0000226211" description="Ketol-acid reductoisomerase (NADP(+))">
    <location>
        <begin position="1"/>
        <end position="494"/>
    </location>
</feature>
<feature type="domain" description="KARI N-terminal Rossmann" evidence="2">
    <location>
        <begin position="14"/>
        <end position="208"/>
    </location>
</feature>
<feature type="domain" description="KARI C-terminal knotted 1" evidence="3">
    <location>
        <begin position="209"/>
        <end position="344"/>
    </location>
</feature>
<feature type="domain" description="KARI C-terminal knotted 2" evidence="3">
    <location>
        <begin position="345"/>
        <end position="487"/>
    </location>
</feature>
<feature type="active site" evidence="1">
    <location>
        <position position="132"/>
    </location>
</feature>
<feature type="binding site" evidence="1">
    <location>
        <begin position="45"/>
        <end position="48"/>
    </location>
    <ligand>
        <name>NADP(+)</name>
        <dbReference type="ChEBI" id="CHEBI:58349"/>
    </ligand>
</feature>
<feature type="binding site" evidence="1">
    <location>
        <position position="68"/>
    </location>
    <ligand>
        <name>NADP(+)</name>
        <dbReference type="ChEBI" id="CHEBI:58349"/>
    </ligand>
</feature>
<feature type="binding site" evidence="1">
    <location>
        <position position="76"/>
    </location>
    <ligand>
        <name>NADP(+)</name>
        <dbReference type="ChEBI" id="CHEBI:58349"/>
    </ligand>
</feature>
<feature type="binding site" evidence="1">
    <location>
        <position position="78"/>
    </location>
    <ligand>
        <name>NADP(+)</name>
        <dbReference type="ChEBI" id="CHEBI:58349"/>
    </ligand>
</feature>
<feature type="binding site" evidence="1">
    <location>
        <begin position="108"/>
        <end position="110"/>
    </location>
    <ligand>
        <name>NADP(+)</name>
        <dbReference type="ChEBI" id="CHEBI:58349"/>
    </ligand>
</feature>
<feature type="binding site" evidence="1">
    <location>
        <position position="158"/>
    </location>
    <ligand>
        <name>NADP(+)</name>
        <dbReference type="ChEBI" id="CHEBI:58349"/>
    </ligand>
</feature>
<feature type="binding site" evidence="1">
    <location>
        <position position="217"/>
    </location>
    <ligand>
        <name>Mg(2+)</name>
        <dbReference type="ChEBI" id="CHEBI:18420"/>
        <label>1</label>
    </ligand>
</feature>
<feature type="binding site" evidence="1">
    <location>
        <position position="217"/>
    </location>
    <ligand>
        <name>Mg(2+)</name>
        <dbReference type="ChEBI" id="CHEBI:18420"/>
        <label>2</label>
    </ligand>
</feature>
<feature type="binding site" evidence="1">
    <location>
        <position position="221"/>
    </location>
    <ligand>
        <name>Mg(2+)</name>
        <dbReference type="ChEBI" id="CHEBI:18420"/>
        <label>1</label>
    </ligand>
</feature>
<feature type="binding site" evidence="1">
    <location>
        <position position="389"/>
    </location>
    <ligand>
        <name>Mg(2+)</name>
        <dbReference type="ChEBI" id="CHEBI:18420"/>
        <label>2</label>
    </ligand>
</feature>
<feature type="binding site" evidence="1">
    <location>
        <position position="393"/>
    </location>
    <ligand>
        <name>Mg(2+)</name>
        <dbReference type="ChEBI" id="CHEBI:18420"/>
        <label>2</label>
    </ligand>
</feature>
<feature type="binding site" evidence="1">
    <location>
        <position position="414"/>
    </location>
    <ligand>
        <name>substrate</name>
    </ligand>
</feature>
<sequence>MSNYFNTLNLREQLDQLGRCRFMDREEFATEADYLKGKKVVIVGCGAQGLNQGLNMRDSGLDVAYALRQAAIDEQRQSYKNAKENGFEVASYETLIPQADLVINLTPDKQHTNVVETVMPLMKEGAALGYSHGFNVVEEGMQIRKDLTVVMVAPKCPGTEVREEYKRGFGVPTLIAVHPENDPKGEGWDIAKAWAAGTGGHRAGCLESSFVAEVKSDLMGEQTILCGMLQAGSIVSYEKMIADGIEPGYAGKLLQYGWETITEALKFGGVTHMMDRLSNPAKVKAFELSEELKELMRPLYNKHMDDIISGEFSRTMMADWANDDVNLFGWREETGQTAFENYPESDVEISEQEYFDNGILLVAMVRAGVELAFEAMTASGIIDESAYYESLHELPLIANTVARKRLYEMNVVISDTAEYGNYLFANVATPLLREKFMPSVETDVIGRGLGEASNQVDNATLIAVNDAIRNHPVEYIGEELRSYMSDMKRIAVGG</sequence>